<organism>
    <name type="scientific">Ruegeria pomeroyi (strain ATCC 700808 / DSM 15171 / DSS-3)</name>
    <name type="common">Silicibacter pomeroyi</name>
    <dbReference type="NCBI Taxonomy" id="246200"/>
    <lineage>
        <taxon>Bacteria</taxon>
        <taxon>Pseudomonadati</taxon>
        <taxon>Pseudomonadota</taxon>
        <taxon>Alphaproteobacteria</taxon>
        <taxon>Rhodobacterales</taxon>
        <taxon>Roseobacteraceae</taxon>
        <taxon>Ruegeria</taxon>
    </lineage>
</organism>
<sequence>MKFLDLAKVYIRSGSGGNGCVSFRREKFIEYGGPDGGDGGKGGSVWAEAVDGLNTLIDFRYQQHFFAQNGVPGKGQQRSGKDGEDIVLRVPVGTEILDEDEETVLADLTEVGQRVLLAKGGNGGFGNLHFKSATNQAPRRANPGQAGVDRTIWLRLKLIADVGLLGLPNAGKSTFLAATSNARPKIADYPFTTLHPNLGVVGVDNVEFVIADIPGLIAGAHEGRGIGDRFLGHVERCAVLLHLVDGTSGDLVEDYHTIIGELEAYGGDLAGKPRVTVLNKIDTLDDEERAFLVEELETASGGPVMMMSGASREGVTEVLRALRARIDANRLREKPVEESQPWQP</sequence>
<keyword id="KW-0963">Cytoplasm</keyword>
<keyword id="KW-0342">GTP-binding</keyword>
<keyword id="KW-0378">Hydrolase</keyword>
<keyword id="KW-0460">Magnesium</keyword>
<keyword id="KW-0479">Metal-binding</keyword>
<keyword id="KW-0547">Nucleotide-binding</keyword>
<keyword id="KW-1185">Reference proteome</keyword>
<comment type="function">
    <text evidence="1">An essential GTPase which binds GTP, GDP and possibly (p)ppGpp with moderate affinity, with high nucleotide exchange rates and a fairly low GTP hydrolysis rate. Plays a role in control of the cell cycle, stress response, ribosome biogenesis and in those bacteria that undergo differentiation, in morphogenesis control.</text>
</comment>
<comment type="cofactor">
    <cofactor evidence="1">
        <name>Mg(2+)</name>
        <dbReference type="ChEBI" id="CHEBI:18420"/>
    </cofactor>
</comment>
<comment type="subunit">
    <text evidence="1">Monomer.</text>
</comment>
<comment type="subcellular location">
    <subcellularLocation>
        <location evidence="1">Cytoplasm</location>
    </subcellularLocation>
</comment>
<comment type="similarity">
    <text evidence="1">Belongs to the TRAFAC class OBG-HflX-like GTPase superfamily. OBG GTPase family.</text>
</comment>
<dbReference type="EC" id="3.6.5.-" evidence="1"/>
<dbReference type="EMBL" id="CP000031">
    <property type="protein sequence ID" value="AAV95262.1"/>
    <property type="molecule type" value="Genomic_DNA"/>
</dbReference>
<dbReference type="RefSeq" id="WP_011047717.1">
    <property type="nucleotide sequence ID" value="NC_003911.12"/>
</dbReference>
<dbReference type="SMR" id="Q5LRY4"/>
<dbReference type="STRING" id="246200.SPO1986"/>
<dbReference type="PaxDb" id="246200-SPO1986"/>
<dbReference type="KEGG" id="sil:SPO1986"/>
<dbReference type="eggNOG" id="COG0536">
    <property type="taxonomic scope" value="Bacteria"/>
</dbReference>
<dbReference type="HOGENOM" id="CLU_011747_2_0_5"/>
<dbReference type="OrthoDB" id="9807318at2"/>
<dbReference type="Proteomes" id="UP000001023">
    <property type="component" value="Chromosome"/>
</dbReference>
<dbReference type="GO" id="GO:0005737">
    <property type="term" value="C:cytoplasm"/>
    <property type="evidence" value="ECO:0007669"/>
    <property type="project" value="UniProtKB-SubCell"/>
</dbReference>
<dbReference type="GO" id="GO:0005525">
    <property type="term" value="F:GTP binding"/>
    <property type="evidence" value="ECO:0007669"/>
    <property type="project" value="UniProtKB-UniRule"/>
</dbReference>
<dbReference type="GO" id="GO:0003924">
    <property type="term" value="F:GTPase activity"/>
    <property type="evidence" value="ECO:0007669"/>
    <property type="project" value="UniProtKB-UniRule"/>
</dbReference>
<dbReference type="GO" id="GO:0000287">
    <property type="term" value="F:magnesium ion binding"/>
    <property type="evidence" value="ECO:0007669"/>
    <property type="project" value="InterPro"/>
</dbReference>
<dbReference type="GO" id="GO:0042254">
    <property type="term" value="P:ribosome biogenesis"/>
    <property type="evidence" value="ECO:0007669"/>
    <property type="project" value="UniProtKB-UniRule"/>
</dbReference>
<dbReference type="CDD" id="cd01898">
    <property type="entry name" value="Obg"/>
    <property type="match status" value="1"/>
</dbReference>
<dbReference type="FunFam" id="2.70.210.12:FF:000001">
    <property type="entry name" value="GTPase Obg"/>
    <property type="match status" value="1"/>
</dbReference>
<dbReference type="Gene3D" id="2.70.210.12">
    <property type="entry name" value="GTP1/OBG domain"/>
    <property type="match status" value="1"/>
</dbReference>
<dbReference type="Gene3D" id="3.40.50.300">
    <property type="entry name" value="P-loop containing nucleotide triphosphate hydrolases"/>
    <property type="match status" value="1"/>
</dbReference>
<dbReference type="HAMAP" id="MF_01454">
    <property type="entry name" value="GTPase_Obg"/>
    <property type="match status" value="1"/>
</dbReference>
<dbReference type="InterPro" id="IPR031167">
    <property type="entry name" value="G_OBG"/>
</dbReference>
<dbReference type="InterPro" id="IPR006073">
    <property type="entry name" value="GTP-bd"/>
</dbReference>
<dbReference type="InterPro" id="IPR014100">
    <property type="entry name" value="GTP-bd_Obg/CgtA"/>
</dbReference>
<dbReference type="InterPro" id="IPR006169">
    <property type="entry name" value="GTP1_OBG_dom"/>
</dbReference>
<dbReference type="InterPro" id="IPR036726">
    <property type="entry name" value="GTP1_OBG_dom_sf"/>
</dbReference>
<dbReference type="InterPro" id="IPR045086">
    <property type="entry name" value="OBG_GTPase"/>
</dbReference>
<dbReference type="InterPro" id="IPR027417">
    <property type="entry name" value="P-loop_NTPase"/>
</dbReference>
<dbReference type="InterPro" id="IPR005225">
    <property type="entry name" value="Small_GTP-bd"/>
</dbReference>
<dbReference type="NCBIfam" id="TIGR02729">
    <property type="entry name" value="Obg_CgtA"/>
    <property type="match status" value="1"/>
</dbReference>
<dbReference type="NCBIfam" id="NF008955">
    <property type="entry name" value="PRK12297.1"/>
    <property type="match status" value="1"/>
</dbReference>
<dbReference type="NCBIfam" id="NF008956">
    <property type="entry name" value="PRK12299.1"/>
    <property type="match status" value="1"/>
</dbReference>
<dbReference type="NCBIfam" id="TIGR00231">
    <property type="entry name" value="small_GTP"/>
    <property type="match status" value="1"/>
</dbReference>
<dbReference type="PANTHER" id="PTHR11702">
    <property type="entry name" value="DEVELOPMENTALLY REGULATED GTP-BINDING PROTEIN-RELATED"/>
    <property type="match status" value="1"/>
</dbReference>
<dbReference type="PANTHER" id="PTHR11702:SF31">
    <property type="entry name" value="MITOCHONDRIAL RIBOSOME-ASSOCIATED GTPASE 2"/>
    <property type="match status" value="1"/>
</dbReference>
<dbReference type="Pfam" id="PF01018">
    <property type="entry name" value="GTP1_OBG"/>
    <property type="match status" value="1"/>
</dbReference>
<dbReference type="Pfam" id="PF01926">
    <property type="entry name" value="MMR_HSR1"/>
    <property type="match status" value="1"/>
</dbReference>
<dbReference type="PIRSF" id="PIRSF002401">
    <property type="entry name" value="GTP_bd_Obg/CgtA"/>
    <property type="match status" value="1"/>
</dbReference>
<dbReference type="PRINTS" id="PR00326">
    <property type="entry name" value="GTP1OBG"/>
</dbReference>
<dbReference type="SUPFAM" id="SSF82051">
    <property type="entry name" value="Obg GTP-binding protein N-terminal domain"/>
    <property type="match status" value="1"/>
</dbReference>
<dbReference type="SUPFAM" id="SSF52540">
    <property type="entry name" value="P-loop containing nucleoside triphosphate hydrolases"/>
    <property type="match status" value="1"/>
</dbReference>
<dbReference type="PROSITE" id="PS51710">
    <property type="entry name" value="G_OBG"/>
    <property type="match status" value="1"/>
</dbReference>
<dbReference type="PROSITE" id="PS51883">
    <property type="entry name" value="OBG"/>
    <property type="match status" value="1"/>
</dbReference>
<evidence type="ECO:0000255" key="1">
    <source>
        <dbReference type="HAMAP-Rule" id="MF_01454"/>
    </source>
</evidence>
<evidence type="ECO:0000255" key="2">
    <source>
        <dbReference type="PROSITE-ProRule" id="PRU01231"/>
    </source>
</evidence>
<proteinExistence type="inferred from homology"/>
<accession>Q5LRY4</accession>
<gene>
    <name evidence="1" type="primary">obg</name>
    <name type="ordered locus">SPO1986</name>
</gene>
<feature type="chain" id="PRO_0000386260" description="GTPase Obg">
    <location>
        <begin position="1"/>
        <end position="344"/>
    </location>
</feature>
<feature type="domain" description="Obg" evidence="2">
    <location>
        <begin position="1"/>
        <end position="159"/>
    </location>
</feature>
<feature type="domain" description="OBG-type G" evidence="1">
    <location>
        <begin position="160"/>
        <end position="327"/>
    </location>
</feature>
<feature type="binding site" evidence="1">
    <location>
        <begin position="166"/>
        <end position="173"/>
    </location>
    <ligand>
        <name>GTP</name>
        <dbReference type="ChEBI" id="CHEBI:37565"/>
    </ligand>
</feature>
<feature type="binding site" evidence="1">
    <location>
        <position position="173"/>
    </location>
    <ligand>
        <name>Mg(2+)</name>
        <dbReference type="ChEBI" id="CHEBI:18420"/>
    </ligand>
</feature>
<feature type="binding site" evidence="1">
    <location>
        <begin position="191"/>
        <end position="195"/>
    </location>
    <ligand>
        <name>GTP</name>
        <dbReference type="ChEBI" id="CHEBI:37565"/>
    </ligand>
</feature>
<feature type="binding site" evidence="1">
    <location>
        <position position="193"/>
    </location>
    <ligand>
        <name>Mg(2+)</name>
        <dbReference type="ChEBI" id="CHEBI:18420"/>
    </ligand>
</feature>
<feature type="binding site" evidence="1">
    <location>
        <begin position="212"/>
        <end position="215"/>
    </location>
    <ligand>
        <name>GTP</name>
        <dbReference type="ChEBI" id="CHEBI:37565"/>
    </ligand>
</feature>
<feature type="binding site" evidence="1">
    <location>
        <begin position="279"/>
        <end position="282"/>
    </location>
    <ligand>
        <name>GTP</name>
        <dbReference type="ChEBI" id="CHEBI:37565"/>
    </ligand>
</feature>
<feature type="binding site" evidence="1">
    <location>
        <begin position="308"/>
        <end position="310"/>
    </location>
    <ligand>
        <name>GTP</name>
        <dbReference type="ChEBI" id="CHEBI:37565"/>
    </ligand>
</feature>
<name>OBG_RUEPO</name>
<protein>
    <recommendedName>
        <fullName evidence="1">GTPase Obg</fullName>
        <ecNumber evidence="1">3.6.5.-</ecNumber>
    </recommendedName>
    <alternativeName>
        <fullName evidence="1">GTP-binding protein Obg</fullName>
    </alternativeName>
</protein>
<reference key="1">
    <citation type="journal article" date="2004" name="Nature">
        <title>Genome sequence of Silicibacter pomeroyi reveals adaptations to the marine environment.</title>
        <authorList>
            <person name="Moran M.A."/>
            <person name="Buchan A."/>
            <person name="Gonzalez J.M."/>
            <person name="Heidelberg J.F."/>
            <person name="Whitman W.B."/>
            <person name="Kiene R.P."/>
            <person name="Henriksen J.R."/>
            <person name="King G.M."/>
            <person name="Belas R."/>
            <person name="Fuqua C."/>
            <person name="Brinkac L.M."/>
            <person name="Lewis M."/>
            <person name="Johri S."/>
            <person name="Weaver B."/>
            <person name="Pai G."/>
            <person name="Eisen J.A."/>
            <person name="Rahe E."/>
            <person name="Sheldon W.M."/>
            <person name="Ye W."/>
            <person name="Miller T.R."/>
            <person name="Carlton J."/>
            <person name="Rasko D.A."/>
            <person name="Paulsen I.T."/>
            <person name="Ren Q."/>
            <person name="Daugherty S.C."/>
            <person name="DeBoy R.T."/>
            <person name="Dodson R.J."/>
            <person name="Durkin A.S."/>
            <person name="Madupu R."/>
            <person name="Nelson W.C."/>
            <person name="Sullivan S.A."/>
            <person name="Rosovitz M.J."/>
            <person name="Haft D.H."/>
            <person name="Selengut J."/>
            <person name="Ward N."/>
        </authorList>
    </citation>
    <scope>NUCLEOTIDE SEQUENCE [LARGE SCALE GENOMIC DNA]</scope>
    <source>
        <strain>ATCC 700808 / DSM 15171 / DSS-3</strain>
    </source>
</reference>
<reference key="2">
    <citation type="journal article" date="2014" name="Stand. Genomic Sci.">
        <title>An updated genome annotation for the model marine bacterium Ruegeria pomeroyi DSS-3.</title>
        <authorList>
            <person name="Rivers A.R."/>
            <person name="Smith C.B."/>
            <person name="Moran M.A."/>
        </authorList>
    </citation>
    <scope>GENOME REANNOTATION</scope>
    <source>
        <strain>ATCC 700808 / DSM 15171 / DSS-3</strain>
    </source>
</reference>